<dbReference type="EMBL" id="U10066">
    <property type="protein sequence ID" value="AAC49019.1"/>
    <property type="molecule type" value="mRNA"/>
</dbReference>
<dbReference type="PIR" id="S53822">
    <property type="entry name" value="S53822"/>
</dbReference>
<dbReference type="SMR" id="Q40298"/>
<dbReference type="GO" id="GO:0009535">
    <property type="term" value="C:chloroplast thylakoid membrane"/>
    <property type="evidence" value="ECO:0007669"/>
    <property type="project" value="UniProtKB-SubCell"/>
</dbReference>
<dbReference type="GO" id="GO:0030076">
    <property type="term" value="C:light-harvesting complex"/>
    <property type="evidence" value="ECO:0007669"/>
    <property type="project" value="UniProtKB-KW"/>
</dbReference>
<dbReference type="GO" id="GO:0009523">
    <property type="term" value="C:photosystem II"/>
    <property type="evidence" value="ECO:0007669"/>
    <property type="project" value="UniProtKB-KW"/>
</dbReference>
<dbReference type="GO" id="GO:0016168">
    <property type="term" value="F:chlorophyll binding"/>
    <property type="evidence" value="ECO:0007669"/>
    <property type="project" value="UniProtKB-KW"/>
</dbReference>
<dbReference type="GO" id="GO:0009765">
    <property type="term" value="P:photosynthesis, light harvesting"/>
    <property type="evidence" value="ECO:0007669"/>
    <property type="project" value="InterPro"/>
</dbReference>
<dbReference type="Gene3D" id="1.10.3460.10">
    <property type="entry name" value="Chlorophyll a/b binding protein domain"/>
    <property type="match status" value="1"/>
</dbReference>
<dbReference type="InterPro" id="IPR001344">
    <property type="entry name" value="Chloro_AB-bd_pln"/>
</dbReference>
<dbReference type="InterPro" id="IPR022796">
    <property type="entry name" value="Chloroa_b-bind"/>
</dbReference>
<dbReference type="PANTHER" id="PTHR21649">
    <property type="entry name" value="CHLOROPHYLL A/B BINDING PROTEIN"/>
    <property type="match status" value="1"/>
</dbReference>
<dbReference type="Pfam" id="PF00504">
    <property type="entry name" value="Chloroa_b-bind"/>
    <property type="match status" value="1"/>
</dbReference>
<dbReference type="SUPFAM" id="SSF103511">
    <property type="entry name" value="Chlorophyll a-b binding protein"/>
    <property type="match status" value="1"/>
</dbReference>
<gene>
    <name type="primary">FCPD</name>
</gene>
<comment type="function">
    <text>The light-harvesting complex (LHC) functions as a light receptor, it captures and delivers excitation energy to photosystems with which it is closely associated. Energy is transferred from the carotenoid and chlorophyll C (or B) to chlorophyll A and the photosynthetic reaction centers where it is used to synthesize ATP and reducing power.</text>
</comment>
<comment type="subunit">
    <text>The LHC complex of chromophytic algae is composed of fucoxanthin, chlorophyll A and C bound non-covalently by fucoxanthin chlorophyll proteins (FCPs). The ratio of pigments in this LHC is; fucoxanthin: chlorophyll C: chlorophyll A; (0.6-1): (0.1-0.3): (1).</text>
</comment>
<comment type="subcellular location">
    <subcellularLocation>
        <location>Plastid</location>
        <location>Chloroplast thylakoid membrane</location>
        <topology>Multi-pass membrane protein</topology>
    </subcellularLocation>
    <text>FCPs are probably transported across the endoplasmic reticulum membranes that surround the plastid via a signal peptide, followed by translocation across the thylakoid membrane via a transit peptide.</text>
</comment>
<comment type="similarity">
    <text evidence="2">Belongs to the fucoxanthin chlorophyll protein family.</text>
</comment>
<protein>
    <recommendedName>
        <fullName>Fucoxanthin-chlorophyll a-c binding protein D, chloroplastic</fullName>
    </recommendedName>
</protein>
<proteinExistence type="evidence at transcript level"/>
<accession>Q40298</accession>
<reference key="1">
    <citation type="journal article" date="1995" name="Mol. Gen. Genet.">
        <title>The gene family encoding the fucoxanthin chlorophyll proteins from the brown alga Macrocystis pyrifera.</title>
        <authorList>
            <person name="Apt K.E."/>
            <person name="Clendennen S.K."/>
            <person name="Powers D.A."/>
            <person name="Grossman A.R."/>
        </authorList>
    </citation>
    <scope>NUCLEOTIDE SEQUENCE [MRNA]</scope>
    <source>
        <strain>MAL-1</strain>
    </source>
</reference>
<sequence length="182" mass="19746">AMKMSFELEIGAQAPLGFWDPLGLLADADQERFERLRYVEVKHGRIAMLAIAGHLTQQNARLPGMLSNSANLSFADMPNGVAALSKIPPGGLAQIFGFIGFLELAVMKNVEGSFPGDFTLGGNPFASSWDAMSEETQESKRAIELNNGRAAQMGILALMVHEELNNKPYVINDLLGASYNFN</sequence>
<name>FCPD_MACPY</name>
<evidence type="ECO:0000255" key="1"/>
<evidence type="ECO:0000305" key="2"/>
<feature type="transit peptide" description="Chloroplast" evidence="2">
    <location>
        <begin position="1" status="less than"/>
        <end position="4"/>
    </location>
</feature>
<feature type="chain" id="PRO_0000021239" description="Fucoxanthin-chlorophyll a-c binding protein D, chloroplastic">
    <location>
        <begin position="5"/>
        <end position="182"/>
    </location>
</feature>
<feature type="transmembrane region" description="Helical" evidence="1">
    <location>
        <begin position="46"/>
        <end position="66"/>
    </location>
</feature>
<feature type="transmembrane region" description="Helical" evidence="1">
    <location>
        <begin position="87"/>
        <end position="107"/>
    </location>
</feature>
<feature type="transmembrane region" description="Helical" evidence="1">
    <location>
        <begin position="148"/>
        <end position="168"/>
    </location>
</feature>
<feature type="non-terminal residue">
    <location>
        <position position="1"/>
    </location>
</feature>
<organism>
    <name type="scientific">Macrocystis pyrifera</name>
    <name type="common">Giant kelp</name>
    <name type="synonym">Fucus pyrifer</name>
    <dbReference type="NCBI Taxonomy" id="35122"/>
    <lineage>
        <taxon>Eukaryota</taxon>
        <taxon>Sar</taxon>
        <taxon>Stramenopiles</taxon>
        <taxon>Ochrophyta</taxon>
        <taxon>PX clade</taxon>
        <taxon>Phaeophyceae</taxon>
        <taxon>Laminariales</taxon>
        <taxon>Laminariaceae</taxon>
        <taxon>Macrocystis</taxon>
    </lineage>
</organism>
<keyword id="KW-0148">Chlorophyll</keyword>
<keyword id="KW-0150">Chloroplast</keyword>
<keyword id="KW-0157">Chromophore</keyword>
<keyword id="KW-0437">Light-harvesting polypeptide</keyword>
<keyword id="KW-0472">Membrane</keyword>
<keyword id="KW-0602">Photosynthesis</keyword>
<keyword id="KW-0604">Photosystem II</keyword>
<keyword id="KW-0934">Plastid</keyword>
<keyword id="KW-0793">Thylakoid</keyword>
<keyword id="KW-0809">Transit peptide</keyword>
<keyword id="KW-0812">Transmembrane</keyword>
<keyword id="KW-1133">Transmembrane helix</keyword>